<name>NDPA_PROMH</name>
<protein>
    <recommendedName>
        <fullName evidence="1">Nucleoid-associated protein PMI0825</fullName>
    </recommendedName>
</protein>
<comment type="subcellular location">
    <subcellularLocation>
        <location evidence="1">Cytoplasm</location>
        <location evidence="1">Nucleoid</location>
    </subcellularLocation>
</comment>
<comment type="similarity">
    <text evidence="1">Belongs to the YejK family.</text>
</comment>
<sequence length="334" mass="38107">MSLDINQLVLHQLIKRDEQTLEVVLRDSLLDIEPVVQEMVEELHRVYSAKSKAYGLFNEESELAQALRLQRQGEEEFLGFSRAATVRLKDELAKYPFAEGGTVLFCHYRYLAVEYLLIAVLNSCNSMWVNDSLDVSSTRYLDIPHADIIARIDLTEWETSPDSLRYLTFLKGRVGRKVSDFFMDFLGAQEGLNTKVQNKGLLQAVDDFCEASDMNKQERQTCREQVYSYCNEQLQSGEEIALTELAQELPPLGDQNFAQFTEEKGYELAETFPADRSTLRQLMKYSGSGGGLTVNFDAKLLGERIFWDPATDTLTIKGTPPNLRDQLQRRVSEK</sequence>
<reference key="1">
    <citation type="journal article" date="2008" name="J. Bacteriol.">
        <title>Complete genome sequence of uropathogenic Proteus mirabilis, a master of both adherence and motility.</title>
        <authorList>
            <person name="Pearson M.M."/>
            <person name="Sebaihia M."/>
            <person name="Churcher C."/>
            <person name="Quail M.A."/>
            <person name="Seshasayee A.S."/>
            <person name="Luscombe N.M."/>
            <person name="Abdellah Z."/>
            <person name="Arrosmith C."/>
            <person name="Atkin B."/>
            <person name="Chillingworth T."/>
            <person name="Hauser H."/>
            <person name="Jagels K."/>
            <person name="Moule S."/>
            <person name="Mungall K."/>
            <person name="Norbertczak H."/>
            <person name="Rabbinowitsch E."/>
            <person name="Walker D."/>
            <person name="Whithead S."/>
            <person name="Thomson N.R."/>
            <person name="Rather P.N."/>
            <person name="Parkhill J."/>
            <person name="Mobley H.L.T."/>
        </authorList>
    </citation>
    <scope>NUCLEOTIDE SEQUENCE [LARGE SCALE GENOMIC DNA]</scope>
    <source>
        <strain>HI4320</strain>
    </source>
</reference>
<organism>
    <name type="scientific">Proteus mirabilis (strain HI4320)</name>
    <dbReference type="NCBI Taxonomy" id="529507"/>
    <lineage>
        <taxon>Bacteria</taxon>
        <taxon>Pseudomonadati</taxon>
        <taxon>Pseudomonadota</taxon>
        <taxon>Gammaproteobacteria</taxon>
        <taxon>Enterobacterales</taxon>
        <taxon>Morganellaceae</taxon>
        <taxon>Proteus</taxon>
    </lineage>
</organism>
<accession>B4ET92</accession>
<keyword id="KW-0963">Cytoplasm</keyword>
<keyword id="KW-1185">Reference proteome</keyword>
<proteinExistence type="inferred from homology"/>
<gene>
    <name type="ordered locus">PMI0825</name>
</gene>
<dbReference type="EMBL" id="AM942759">
    <property type="protein sequence ID" value="CAR41878.1"/>
    <property type="molecule type" value="Genomic_DNA"/>
</dbReference>
<dbReference type="SMR" id="B4ET92"/>
<dbReference type="EnsemblBacteria" id="CAR41878">
    <property type="protein sequence ID" value="CAR41878"/>
    <property type="gene ID" value="PMI0825"/>
</dbReference>
<dbReference type="GeneID" id="6803602"/>
<dbReference type="KEGG" id="pmr:PMI0825"/>
<dbReference type="eggNOG" id="COG3081">
    <property type="taxonomic scope" value="Bacteria"/>
</dbReference>
<dbReference type="HOGENOM" id="CLU_063050_0_1_6"/>
<dbReference type="Proteomes" id="UP000008319">
    <property type="component" value="Chromosome"/>
</dbReference>
<dbReference type="GO" id="GO:0043590">
    <property type="term" value="C:bacterial nucleoid"/>
    <property type="evidence" value="ECO:0007669"/>
    <property type="project" value="TreeGrafter"/>
</dbReference>
<dbReference type="GO" id="GO:0005737">
    <property type="term" value="C:cytoplasm"/>
    <property type="evidence" value="ECO:0007669"/>
    <property type="project" value="UniProtKB-UniRule"/>
</dbReference>
<dbReference type="GO" id="GO:0003690">
    <property type="term" value="F:double-stranded DNA binding"/>
    <property type="evidence" value="ECO:0007669"/>
    <property type="project" value="TreeGrafter"/>
</dbReference>
<dbReference type="GO" id="GO:0003727">
    <property type="term" value="F:single-stranded RNA binding"/>
    <property type="evidence" value="ECO:0007669"/>
    <property type="project" value="TreeGrafter"/>
</dbReference>
<dbReference type="HAMAP" id="MF_00730">
    <property type="entry name" value="NdpA"/>
    <property type="match status" value="1"/>
</dbReference>
<dbReference type="InterPro" id="IPR007358">
    <property type="entry name" value="Nucleoid_associated_NdpA"/>
</dbReference>
<dbReference type="NCBIfam" id="NF001557">
    <property type="entry name" value="PRK00378.1"/>
    <property type="match status" value="1"/>
</dbReference>
<dbReference type="PANTHER" id="PTHR38772">
    <property type="match status" value="1"/>
</dbReference>
<dbReference type="PANTHER" id="PTHR38772:SF1">
    <property type="entry name" value="NUCLEOID-ASSOCIATED PROTEIN YEJK"/>
    <property type="match status" value="1"/>
</dbReference>
<dbReference type="Pfam" id="PF04245">
    <property type="entry name" value="NA37"/>
    <property type="match status" value="1"/>
</dbReference>
<feature type="chain" id="PRO_1000132724" description="Nucleoid-associated protein PMI0825">
    <location>
        <begin position="1"/>
        <end position="334"/>
    </location>
</feature>
<evidence type="ECO:0000255" key="1">
    <source>
        <dbReference type="HAMAP-Rule" id="MF_00730"/>
    </source>
</evidence>